<gene>
    <name evidence="1" type="primary">uvrB</name>
    <name type="ordered locus">RPR_01950</name>
</gene>
<proteinExistence type="inferred from homology"/>
<organism>
    <name type="scientific">Rickettsia peacockii (strain Rustic)</name>
    <dbReference type="NCBI Taxonomy" id="562019"/>
    <lineage>
        <taxon>Bacteria</taxon>
        <taxon>Pseudomonadati</taxon>
        <taxon>Pseudomonadota</taxon>
        <taxon>Alphaproteobacteria</taxon>
        <taxon>Rickettsiales</taxon>
        <taxon>Rickettsiaceae</taxon>
        <taxon>Rickettsieae</taxon>
        <taxon>Rickettsia</taxon>
        <taxon>spotted fever group</taxon>
    </lineage>
</organism>
<reference key="1">
    <citation type="journal article" date="2009" name="PLoS ONE">
        <title>Genome sequence of the endosymbiont Rickettsia peacockii and comparison with virulent Rickettsia rickettsii: identification of virulence factors.</title>
        <authorList>
            <person name="Felsheim R.F."/>
            <person name="Kurtti T.J."/>
            <person name="Munderloh U.G."/>
        </authorList>
    </citation>
    <scope>NUCLEOTIDE SEQUENCE [LARGE SCALE GENOMIC DNA]</scope>
    <source>
        <strain>Rustic</strain>
    </source>
</reference>
<evidence type="ECO:0000255" key="1">
    <source>
        <dbReference type="HAMAP-Rule" id="MF_00204"/>
    </source>
</evidence>
<comment type="function">
    <text evidence="1">The UvrABC repair system catalyzes the recognition and processing of DNA lesions. A damage recognition complex composed of 2 UvrA and 2 UvrB subunits scans DNA for abnormalities. Upon binding of the UvrA(2)B(2) complex to a putative damaged site, the DNA wraps around one UvrB monomer. DNA wrap is dependent on ATP binding by UvrB and probably causes local melting of the DNA helix, facilitating insertion of UvrB beta-hairpin between the DNA strands. Then UvrB probes one DNA strand for the presence of a lesion. If a lesion is found the UvrA subunits dissociate and the UvrB-DNA preincision complex is formed. This complex is subsequently bound by UvrC and the second UvrB is released. If no lesion is found, the DNA wraps around the other UvrB subunit that will check the other stand for damage.</text>
</comment>
<comment type="subunit">
    <text evidence="1">Forms a heterotetramer with UvrA during the search for lesions. Interacts with UvrC in an incision complex.</text>
</comment>
<comment type="subcellular location">
    <subcellularLocation>
        <location evidence="1">Cytoplasm</location>
    </subcellularLocation>
</comment>
<comment type="domain">
    <text evidence="1">The beta-hairpin motif is involved in DNA binding.</text>
</comment>
<comment type="similarity">
    <text evidence="1">Belongs to the UvrB family.</text>
</comment>
<dbReference type="EMBL" id="CP001227">
    <property type="protein sequence ID" value="ACR47245.1"/>
    <property type="molecule type" value="Genomic_DNA"/>
</dbReference>
<dbReference type="RefSeq" id="WP_012736522.1">
    <property type="nucleotide sequence ID" value="NC_012730.1"/>
</dbReference>
<dbReference type="SMR" id="C4K0Z4"/>
<dbReference type="KEGG" id="rpk:RPR_01950"/>
<dbReference type="HOGENOM" id="CLU_009621_2_1_5"/>
<dbReference type="Proteomes" id="UP000005015">
    <property type="component" value="Chromosome"/>
</dbReference>
<dbReference type="GO" id="GO:0005737">
    <property type="term" value="C:cytoplasm"/>
    <property type="evidence" value="ECO:0007669"/>
    <property type="project" value="UniProtKB-SubCell"/>
</dbReference>
<dbReference type="GO" id="GO:0009380">
    <property type="term" value="C:excinuclease repair complex"/>
    <property type="evidence" value="ECO:0007669"/>
    <property type="project" value="InterPro"/>
</dbReference>
<dbReference type="GO" id="GO:0005524">
    <property type="term" value="F:ATP binding"/>
    <property type="evidence" value="ECO:0007669"/>
    <property type="project" value="UniProtKB-UniRule"/>
</dbReference>
<dbReference type="GO" id="GO:0016887">
    <property type="term" value="F:ATP hydrolysis activity"/>
    <property type="evidence" value="ECO:0007669"/>
    <property type="project" value="InterPro"/>
</dbReference>
<dbReference type="GO" id="GO:0003677">
    <property type="term" value="F:DNA binding"/>
    <property type="evidence" value="ECO:0007669"/>
    <property type="project" value="UniProtKB-UniRule"/>
</dbReference>
<dbReference type="GO" id="GO:0009381">
    <property type="term" value="F:excinuclease ABC activity"/>
    <property type="evidence" value="ECO:0007669"/>
    <property type="project" value="UniProtKB-UniRule"/>
</dbReference>
<dbReference type="GO" id="GO:0004386">
    <property type="term" value="F:helicase activity"/>
    <property type="evidence" value="ECO:0007669"/>
    <property type="project" value="UniProtKB-KW"/>
</dbReference>
<dbReference type="GO" id="GO:0006289">
    <property type="term" value="P:nucleotide-excision repair"/>
    <property type="evidence" value="ECO:0007669"/>
    <property type="project" value="UniProtKB-UniRule"/>
</dbReference>
<dbReference type="GO" id="GO:0009432">
    <property type="term" value="P:SOS response"/>
    <property type="evidence" value="ECO:0007669"/>
    <property type="project" value="UniProtKB-UniRule"/>
</dbReference>
<dbReference type="CDD" id="cd17916">
    <property type="entry name" value="DEXHc_UvrB"/>
    <property type="match status" value="1"/>
</dbReference>
<dbReference type="CDD" id="cd18790">
    <property type="entry name" value="SF2_C_UvrB"/>
    <property type="match status" value="1"/>
</dbReference>
<dbReference type="Gene3D" id="3.40.50.300">
    <property type="entry name" value="P-loop containing nucleotide triphosphate hydrolases"/>
    <property type="match status" value="3"/>
</dbReference>
<dbReference type="Gene3D" id="4.10.860.10">
    <property type="entry name" value="UVR domain"/>
    <property type="match status" value="1"/>
</dbReference>
<dbReference type="HAMAP" id="MF_00204">
    <property type="entry name" value="UvrB"/>
    <property type="match status" value="1"/>
</dbReference>
<dbReference type="InterPro" id="IPR006935">
    <property type="entry name" value="Helicase/UvrB_N"/>
</dbReference>
<dbReference type="InterPro" id="IPR014001">
    <property type="entry name" value="Helicase_ATP-bd"/>
</dbReference>
<dbReference type="InterPro" id="IPR001650">
    <property type="entry name" value="Helicase_C-like"/>
</dbReference>
<dbReference type="InterPro" id="IPR027417">
    <property type="entry name" value="P-loop_NTPase"/>
</dbReference>
<dbReference type="InterPro" id="IPR001943">
    <property type="entry name" value="UVR_dom"/>
</dbReference>
<dbReference type="InterPro" id="IPR036876">
    <property type="entry name" value="UVR_dom_sf"/>
</dbReference>
<dbReference type="InterPro" id="IPR004807">
    <property type="entry name" value="UvrB"/>
</dbReference>
<dbReference type="InterPro" id="IPR041471">
    <property type="entry name" value="UvrB_inter"/>
</dbReference>
<dbReference type="InterPro" id="IPR024759">
    <property type="entry name" value="UvrB_YAD/RRR_dom"/>
</dbReference>
<dbReference type="NCBIfam" id="NF003673">
    <property type="entry name" value="PRK05298.1"/>
    <property type="match status" value="1"/>
</dbReference>
<dbReference type="NCBIfam" id="TIGR00631">
    <property type="entry name" value="uvrb"/>
    <property type="match status" value="1"/>
</dbReference>
<dbReference type="PANTHER" id="PTHR24029">
    <property type="entry name" value="UVRABC SYSTEM PROTEIN B"/>
    <property type="match status" value="1"/>
</dbReference>
<dbReference type="PANTHER" id="PTHR24029:SF0">
    <property type="entry name" value="UVRABC SYSTEM PROTEIN B"/>
    <property type="match status" value="1"/>
</dbReference>
<dbReference type="Pfam" id="PF00271">
    <property type="entry name" value="Helicase_C"/>
    <property type="match status" value="1"/>
</dbReference>
<dbReference type="Pfam" id="PF04851">
    <property type="entry name" value="ResIII"/>
    <property type="match status" value="1"/>
</dbReference>
<dbReference type="Pfam" id="PF02151">
    <property type="entry name" value="UVR"/>
    <property type="match status" value="1"/>
</dbReference>
<dbReference type="Pfam" id="PF12344">
    <property type="entry name" value="UvrB"/>
    <property type="match status" value="1"/>
</dbReference>
<dbReference type="Pfam" id="PF17757">
    <property type="entry name" value="UvrB_inter"/>
    <property type="match status" value="1"/>
</dbReference>
<dbReference type="SMART" id="SM00487">
    <property type="entry name" value="DEXDc"/>
    <property type="match status" value="1"/>
</dbReference>
<dbReference type="SMART" id="SM00490">
    <property type="entry name" value="HELICc"/>
    <property type="match status" value="1"/>
</dbReference>
<dbReference type="SUPFAM" id="SSF46600">
    <property type="entry name" value="C-terminal UvrC-binding domain of UvrB"/>
    <property type="match status" value="1"/>
</dbReference>
<dbReference type="SUPFAM" id="SSF52540">
    <property type="entry name" value="P-loop containing nucleoside triphosphate hydrolases"/>
    <property type="match status" value="2"/>
</dbReference>
<dbReference type="PROSITE" id="PS51192">
    <property type="entry name" value="HELICASE_ATP_BIND_1"/>
    <property type="match status" value="1"/>
</dbReference>
<dbReference type="PROSITE" id="PS51194">
    <property type="entry name" value="HELICASE_CTER"/>
    <property type="match status" value="1"/>
</dbReference>
<dbReference type="PROSITE" id="PS50151">
    <property type="entry name" value="UVR"/>
    <property type="match status" value="1"/>
</dbReference>
<name>UVRB_RICPU</name>
<keyword id="KW-0067">ATP-binding</keyword>
<keyword id="KW-0963">Cytoplasm</keyword>
<keyword id="KW-0227">DNA damage</keyword>
<keyword id="KW-0228">DNA excision</keyword>
<keyword id="KW-0234">DNA repair</keyword>
<keyword id="KW-0267">Excision nuclease</keyword>
<keyword id="KW-0347">Helicase</keyword>
<keyword id="KW-0378">Hydrolase</keyword>
<keyword id="KW-0547">Nucleotide-binding</keyword>
<keyword id="KW-0742">SOS response</keyword>
<protein>
    <recommendedName>
        <fullName evidence="1">UvrABC system protein B</fullName>
        <shortName evidence="1">Protein UvrB</shortName>
    </recommendedName>
    <alternativeName>
        <fullName evidence="1">Excinuclease ABC subunit B</fullName>
    </alternativeName>
</protein>
<feature type="chain" id="PRO_1000204140" description="UvrABC system protein B">
    <location>
        <begin position="1"/>
        <end position="661"/>
    </location>
</feature>
<feature type="domain" description="Helicase ATP-binding" evidence="1">
    <location>
        <begin position="25"/>
        <end position="182"/>
    </location>
</feature>
<feature type="domain" description="Helicase C-terminal" evidence="1">
    <location>
        <begin position="430"/>
        <end position="592"/>
    </location>
</feature>
<feature type="domain" description="UVR" evidence="1">
    <location>
        <begin position="621"/>
        <end position="656"/>
    </location>
</feature>
<feature type="short sequence motif" description="Beta-hairpin">
    <location>
        <begin position="91"/>
        <end position="114"/>
    </location>
</feature>
<feature type="binding site" evidence="1">
    <location>
        <begin position="38"/>
        <end position="45"/>
    </location>
    <ligand>
        <name>ATP</name>
        <dbReference type="ChEBI" id="CHEBI:30616"/>
    </ligand>
</feature>
<accession>C4K0Z4</accession>
<sequence length="661" mass="75314">MNNFSIISEYKPAGDQPKAIDEIIAGLSSKKRSQMLLGITGSGKTFTMANIIERTNRPTLIMAHNKTLAAQIYSEMKSLFPKNAVEYFVSYYDYYQPEAYIARTDTFIEKDSSINEQIDLMRHAATRSLLERRDVIVVSSVSCIYGLGSPDLYYQMMVNLEPGQSYLRDQLLNDLINLQYERNDIGFERGCFRVKGDNIDIFPSHYSDKAWRLSFFGNELEYIHEFDPLTGEKLAKLDKAMVFGNSHFVMPQETVNNAISGIEEELQKRLEFLKSQDKPLETQRLNQRTQYDLEMLTETGSCKGVENYSRFFTGRHAGEPPPTLFEYLPEDALLFVDESHVSVPQIRAMYNGDRARKKVLVEHGFRLPSALDNRPLKFEEWDKFRPQTVFVSATPGPFELEETGGTVVELIIRPTGLLDPECIIKPATNQVEDLISEIQTTIAQGFRVLVTTLTKKMAEDLTAYLQELKYKTSYLHSNVHTLERIEILRDLRQGTIDVLVGINLLREGLDIPECGLVAILDADKEGFLRSEVSLIQTIGRAARNSAGRVILYADKMTKSIDKAVSETLRRRQIQQEYNEKHGIIPKTINRAIHALAEFEKIDSKLDKKQAHTLFDNPAKLKTHIDKLKKEMLKAASNLEFEQAVKLRDQLKTLEAAALELS</sequence>